<gene>
    <name type="primary">ywzA</name>
    <name type="ordered locus">BSU38180</name>
</gene>
<dbReference type="EMBL" id="AL009126">
    <property type="protein sequence ID" value="CAB15844.2"/>
    <property type="molecule type" value="Genomic_DNA"/>
</dbReference>
<dbReference type="RefSeq" id="NP_391697.2">
    <property type="nucleotide sequence ID" value="NC_000964.3"/>
</dbReference>
<dbReference type="RefSeq" id="WP_009968363.1">
    <property type="nucleotide sequence ID" value="NZ_OZ025638.1"/>
</dbReference>
<dbReference type="FunCoup" id="O32282">
    <property type="interactions" value="53"/>
</dbReference>
<dbReference type="STRING" id="224308.BSU38180"/>
<dbReference type="PaxDb" id="224308-BSU38180"/>
<dbReference type="EnsemblBacteria" id="CAB15844">
    <property type="protein sequence ID" value="CAB15844"/>
    <property type="gene ID" value="BSU_38180"/>
</dbReference>
<dbReference type="GeneID" id="937305"/>
<dbReference type="KEGG" id="bsu:BSU38180"/>
<dbReference type="PATRIC" id="fig|224308.179.peg.4133"/>
<dbReference type="eggNOG" id="COG2261">
    <property type="taxonomic scope" value="Bacteria"/>
</dbReference>
<dbReference type="InParanoid" id="O32282"/>
<dbReference type="OrthoDB" id="1632160at2"/>
<dbReference type="PhylomeDB" id="O32282"/>
<dbReference type="BioCyc" id="BSUB:BSU38180-MONOMER"/>
<dbReference type="Proteomes" id="UP000001570">
    <property type="component" value="Chromosome"/>
</dbReference>
<dbReference type="GO" id="GO:0005886">
    <property type="term" value="C:plasma membrane"/>
    <property type="evidence" value="ECO:0007669"/>
    <property type="project" value="UniProtKB-SubCell"/>
</dbReference>
<dbReference type="InterPro" id="IPR007341">
    <property type="entry name" value="Transgly_assoc"/>
</dbReference>
<dbReference type="PANTHER" id="PTHR33884">
    <property type="entry name" value="UPF0410 PROTEIN YMGE"/>
    <property type="match status" value="1"/>
</dbReference>
<dbReference type="PANTHER" id="PTHR33884:SF3">
    <property type="entry name" value="UPF0410 PROTEIN YMGE"/>
    <property type="match status" value="1"/>
</dbReference>
<dbReference type="Pfam" id="PF04226">
    <property type="entry name" value="Transgly_assoc"/>
    <property type="match status" value="1"/>
</dbReference>
<feature type="chain" id="PRO_0000389135" description="UPF0410 protein YwzA">
    <location>
        <begin position="1"/>
        <end position="81"/>
    </location>
</feature>
<feature type="transmembrane region" description="Helical" evidence="1">
    <location>
        <begin position="1"/>
        <end position="21"/>
    </location>
</feature>
<feature type="transmembrane region" description="Helical" evidence="1">
    <location>
        <begin position="27"/>
        <end position="47"/>
    </location>
</feature>
<feature type="transmembrane region" description="Helical" evidence="1">
    <location>
        <begin position="56"/>
        <end position="76"/>
    </location>
</feature>
<reference key="1">
    <citation type="journal article" date="1997" name="Nature">
        <title>The complete genome sequence of the Gram-positive bacterium Bacillus subtilis.</title>
        <authorList>
            <person name="Kunst F."/>
            <person name="Ogasawara N."/>
            <person name="Moszer I."/>
            <person name="Albertini A.M."/>
            <person name="Alloni G."/>
            <person name="Azevedo V."/>
            <person name="Bertero M.G."/>
            <person name="Bessieres P."/>
            <person name="Bolotin A."/>
            <person name="Borchert S."/>
            <person name="Borriss R."/>
            <person name="Boursier L."/>
            <person name="Brans A."/>
            <person name="Braun M."/>
            <person name="Brignell S.C."/>
            <person name="Bron S."/>
            <person name="Brouillet S."/>
            <person name="Bruschi C.V."/>
            <person name="Caldwell B."/>
            <person name="Capuano V."/>
            <person name="Carter N.M."/>
            <person name="Choi S.-K."/>
            <person name="Codani J.-J."/>
            <person name="Connerton I.F."/>
            <person name="Cummings N.J."/>
            <person name="Daniel R.A."/>
            <person name="Denizot F."/>
            <person name="Devine K.M."/>
            <person name="Duesterhoeft A."/>
            <person name="Ehrlich S.D."/>
            <person name="Emmerson P.T."/>
            <person name="Entian K.-D."/>
            <person name="Errington J."/>
            <person name="Fabret C."/>
            <person name="Ferrari E."/>
            <person name="Foulger D."/>
            <person name="Fritz C."/>
            <person name="Fujita M."/>
            <person name="Fujita Y."/>
            <person name="Fuma S."/>
            <person name="Galizzi A."/>
            <person name="Galleron N."/>
            <person name="Ghim S.-Y."/>
            <person name="Glaser P."/>
            <person name="Goffeau A."/>
            <person name="Golightly E.J."/>
            <person name="Grandi G."/>
            <person name="Guiseppi G."/>
            <person name="Guy B.J."/>
            <person name="Haga K."/>
            <person name="Haiech J."/>
            <person name="Harwood C.R."/>
            <person name="Henaut A."/>
            <person name="Hilbert H."/>
            <person name="Holsappel S."/>
            <person name="Hosono S."/>
            <person name="Hullo M.-F."/>
            <person name="Itaya M."/>
            <person name="Jones L.-M."/>
            <person name="Joris B."/>
            <person name="Karamata D."/>
            <person name="Kasahara Y."/>
            <person name="Klaerr-Blanchard M."/>
            <person name="Klein C."/>
            <person name="Kobayashi Y."/>
            <person name="Koetter P."/>
            <person name="Koningstein G."/>
            <person name="Krogh S."/>
            <person name="Kumano M."/>
            <person name="Kurita K."/>
            <person name="Lapidus A."/>
            <person name="Lardinois S."/>
            <person name="Lauber J."/>
            <person name="Lazarevic V."/>
            <person name="Lee S.-M."/>
            <person name="Levine A."/>
            <person name="Liu H."/>
            <person name="Masuda S."/>
            <person name="Mauel C."/>
            <person name="Medigue C."/>
            <person name="Medina N."/>
            <person name="Mellado R.P."/>
            <person name="Mizuno M."/>
            <person name="Moestl D."/>
            <person name="Nakai S."/>
            <person name="Noback M."/>
            <person name="Noone D."/>
            <person name="O'Reilly M."/>
            <person name="Ogawa K."/>
            <person name="Ogiwara A."/>
            <person name="Oudega B."/>
            <person name="Park S.-H."/>
            <person name="Parro V."/>
            <person name="Pohl T.M."/>
            <person name="Portetelle D."/>
            <person name="Porwollik S."/>
            <person name="Prescott A.M."/>
            <person name="Presecan E."/>
            <person name="Pujic P."/>
            <person name="Purnelle B."/>
            <person name="Rapoport G."/>
            <person name="Rey M."/>
            <person name="Reynolds S."/>
            <person name="Rieger M."/>
            <person name="Rivolta C."/>
            <person name="Rocha E."/>
            <person name="Roche B."/>
            <person name="Rose M."/>
            <person name="Sadaie Y."/>
            <person name="Sato T."/>
            <person name="Scanlan E."/>
            <person name="Schleich S."/>
            <person name="Schroeter R."/>
            <person name="Scoffone F."/>
            <person name="Sekiguchi J."/>
            <person name="Sekowska A."/>
            <person name="Seror S.J."/>
            <person name="Serror P."/>
            <person name="Shin B.-S."/>
            <person name="Soldo B."/>
            <person name="Sorokin A."/>
            <person name="Tacconi E."/>
            <person name="Takagi T."/>
            <person name="Takahashi H."/>
            <person name="Takemaru K."/>
            <person name="Takeuchi M."/>
            <person name="Tamakoshi A."/>
            <person name="Tanaka T."/>
            <person name="Terpstra P."/>
            <person name="Tognoni A."/>
            <person name="Tosato V."/>
            <person name="Uchiyama S."/>
            <person name="Vandenbol M."/>
            <person name="Vannier F."/>
            <person name="Vassarotti A."/>
            <person name="Viari A."/>
            <person name="Wambutt R."/>
            <person name="Wedler E."/>
            <person name="Wedler H."/>
            <person name="Weitzenegger T."/>
            <person name="Winters P."/>
            <person name="Wipat A."/>
            <person name="Yamamoto H."/>
            <person name="Yamane K."/>
            <person name="Yasumoto K."/>
            <person name="Yata K."/>
            <person name="Yoshida K."/>
            <person name="Yoshikawa H.-F."/>
            <person name="Zumstein E."/>
            <person name="Yoshikawa H."/>
            <person name="Danchin A."/>
        </authorList>
    </citation>
    <scope>NUCLEOTIDE SEQUENCE [LARGE SCALE GENOMIC DNA]</scope>
    <source>
        <strain>168</strain>
    </source>
</reference>
<reference key="2">
    <citation type="journal article" date="2009" name="Microbiology">
        <title>From a consortium sequence to a unified sequence: the Bacillus subtilis 168 reference genome a decade later.</title>
        <authorList>
            <person name="Barbe V."/>
            <person name="Cruveiller S."/>
            <person name="Kunst F."/>
            <person name="Lenoble P."/>
            <person name="Meurice G."/>
            <person name="Sekowska A."/>
            <person name="Vallenet D."/>
            <person name="Wang T."/>
            <person name="Moszer I."/>
            <person name="Medigue C."/>
            <person name="Danchin A."/>
        </authorList>
    </citation>
    <scope>SEQUENCE REVISION</scope>
</reference>
<sequence length="81" mass="8294">MSFLISLIVAIIIGWLGSLFVKGDMPGGIIGSMIAGLIGAWIGHGLLGTWGPHLAGFAIIPAVIGAAIVVFLVSLLTRKRG</sequence>
<comment type="subcellular location">
    <subcellularLocation>
        <location evidence="2">Cell membrane</location>
        <topology evidence="2">Multi-pass membrane protein</topology>
    </subcellularLocation>
</comment>
<comment type="similarity">
    <text evidence="2">Belongs to the UPF0410 family.</text>
</comment>
<protein>
    <recommendedName>
        <fullName>UPF0410 protein YwzA</fullName>
    </recommendedName>
</protein>
<organism>
    <name type="scientific">Bacillus subtilis (strain 168)</name>
    <dbReference type="NCBI Taxonomy" id="224308"/>
    <lineage>
        <taxon>Bacteria</taxon>
        <taxon>Bacillati</taxon>
        <taxon>Bacillota</taxon>
        <taxon>Bacilli</taxon>
        <taxon>Bacillales</taxon>
        <taxon>Bacillaceae</taxon>
        <taxon>Bacillus</taxon>
    </lineage>
</organism>
<accession>O32282</accession>
<evidence type="ECO:0000255" key="1"/>
<evidence type="ECO:0000305" key="2"/>
<name>YWZA_BACSU</name>
<proteinExistence type="inferred from homology"/>
<keyword id="KW-1003">Cell membrane</keyword>
<keyword id="KW-0472">Membrane</keyword>
<keyword id="KW-1185">Reference proteome</keyword>
<keyword id="KW-0812">Transmembrane</keyword>
<keyword id="KW-1133">Transmembrane helix</keyword>